<sequence>MLKSFSMDFAFFEGKIVPVEEAKISIMTNSFHYGTAIFEGIRAYWNEEEEQLYILFAKEHYERLLTNARCLFMELNYSAEELVEITKEILRKSEIREDVYIRPIAYFKDLKLTPKLIDYTPEIAIYLYRFGRYLDTSKGIRAKVSSWRRNDDNSIPSRWKVAGAYVNSALAKTEALMSGYDEAILLNSQGYVAEGSGENIFIIKNGKAITPSPNEHILEGITRNAVITLLKKELVVEVEERPIARSELYTADEVFLTGTAAEVTPVVEIDNRKIGNGEIGPITKQLQEFYFNAVRGKIQRYKKWLTPVYDK</sequence>
<evidence type="ECO:0000250" key="1"/>
<evidence type="ECO:0000305" key="2"/>
<proteinExistence type="inferred from homology"/>
<accession>O67733</accession>
<gene>
    <name type="primary">ilvE</name>
    <name type="ordered locus">aq_1893</name>
</gene>
<reference key="1">
    <citation type="journal article" date="1998" name="Nature">
        <title>The complete genome of the hyperthermophilic bacterium Aquifex aeolicus.</title>
        <authorList>
            <person name="Deckert G."/>
            <person name="Warren P.V."/>
            <person name="Gaasterland T."/>
            <person name="Young W.G."/>
            <person name="Lenox A.L."/>
            <person name="Graham D.E."/>
            <person name="Overbeek R."/>
            <person name="Snead M.A."/>
            <person name="Keller M."/>
            <person name="Aujay M."/>
            <person name="Huber R."/>
            <person name="Feldman R.A."/>
            <person name="Short J.M."/>
            <person name="Olsen G.J."/>
            <person name="Swanson R.V."/>
        </authorList>
    </citation>
    <scope>NUCLEOTIDE SEQUENCE [LARGE SCALE GENOMIC DNA]</scope>
    <source>
        <strain>VF5</strain>
    </source>
</reference>
<name>ILVE_AQUAE</name>
<organism>
    <name type="scientific">Aquifex aeolicus (strain VF5)</name>
    <dbReference type="NCBI Taxonomy" id="224324"/>
    <lineage>
        <taxon>Bacteria</taxon>
        <taxon>Pseudomonadati</taxon>
        <taxon>Aquificota</taxon>
        <taxon>Aquificia</taxon>
        <taxon>Aquificales</taxon>
        <taxon>Aquificaceae</taxon>
        <taxon>Aquifex</taxon>
    </lineage>
</organism>
<comment type="function">
    <text evidence="1">Acts on leucine, isoleucine and valine.</text>
</comment>
<comment type="catalytic activity">
    <reaction>
        <text>L-leucine + 2-oxoglutarate = 4-methyl-2-oxopentanoate + L-glutamate</text>
        <dbReference type="Rhea" id="RHEA:18321"/>
        <dbReference type="ChEBI" id="CHEBI:16810"/>
        <dbReference type="ChEBI" id="CHEBI:17865"/>
        <dbReference type="ChEBI" id="CHEBI:29985"/>
        <dbReference type="ChEBI" id="CHEBI:57427"/>
        <dbReference type="EC" id="2.6.1.42"/>
    </reaction>
</comment>
<comment type="catalytic activity">
    <reaction>
        <text>L-isoleucine + 2-oxoglutarate = (S)-3-methyl-2-oxopentanoate + L-glutamate</text>
        <dbReference type="Rhea" id="RHEA:24801"/>
        <dbReference type="ChEBI" id="CHEBI:16810"/>
        <dbReference type="ChEBI" id="CHEBI:29985"/>
        <dbReference type="ChEBI" id="CHEBI:35146"/>
        <dbReference type="ChEBI" id="CHEBI:58045"/>
        <dbReference type="EC" id="2.6.1.42"/>
    </reaction>
</comment>
<comment type="catalytic activity">
    <reaction>
        <text>L-valine + 2-oxoglutarate = 3-methyl-2-oxobutanoate + L-glutamate</text>
        <dbReference type="Rhea" id="RHEA:24813"/>
        <dbReference type="ChEBI" id="CHEBI:11851"/>
        <dbReference type="ChEBI" id="CHEBI:16810"/>
        <dbReference type="ChEBI" id="CHEBI:29985"/>
        <dbReference type="ChEBI" id="CHEBI:57762"/>
        <dbReference type="EC" id="2.6.1.42"/>
    </reaction>
</comment>
<comment type="cofactor">
    <cofactor>
        <name>pyridoxal 5'-phosphate</name>
        <dbReference type="ChEBI" id="CHEBI:597326"/>
    </cofactor>
</comment>
<comment type="pathway">
    <text>Amino-acid biosynthesis; L-isoleucine biosynthesis; L-isoleucine from 2-oxobutanoate: step 4/4.</text>
</comment>
<comment type="pathway">
    <text>Amino-acid biosynthesis; L-leucine biosynthesis; L-leucine from 3-methyl-2-oxobutanoate: step 4/4.</text>
</comment>
<comment type="pathway">
    <text>Amino-acid biosynthesis; L-valine biosynthesis; L-valine from pyruvate: step 4/4.</text>
</comment>
<comment type="similarity">
    <text evidence="2">Belongs to the class-IV pyridoxal-phosphate-dependent aminotransferase family.</text>
</comment>
<dbReference type="EC" id="2.6.1.42"/>
<dbReference type="EMBL" id="AE000657">
    <property type="protein sequence ID" value="AAC07697.1"/>
    <property type="molecule type" value="Genomic_DNA"/>
</dbReference>
<dbReference type="PIR" id="C70463">
    <property type="entry name" value="C70463"/>
</dbReference>
<dbReference type="RefSeq" id="NP_214301.1">
    <property type="nucleotide sequence ID" value="NC_000918.1"/>
</dbReference>
<dbReference type="SMR" id="O67733"/>
<dbReference type="FunCoup" id="O67733">
    <property type="interactions" value="387"/>
</dbReference>
<dbReference type="STRING" id="224324.aq_1893"/>
<dbReference type="EnsemblBacteria" id="AAC07697">
    <property type="protein sequence ID" value="AAC07697"/>
    <property type="gene ID" value="aq_1893"/>
</dbReference>
<dbReference type="KEGG" id="aae:aq_1893"/>
<dbReference type="PATRIC" id="fig|224324.8.peg.1467"/>
<dbReference type="eggNOG" id="COG0115">
    <property type="taxonomic scope" value="Bacteria"/>
</dbReference>
<dbReference type="HOGENOM" id="CLU_020844_3_1_0"/>
<dbReference type="InParanoid" id="O67733"/>
<dbReference type="OrthoDB" id="9805628at2"/>
<dbReference type="UniPathway" id="UPA00047">
    <property type="reaction ID" value="UER00058"/>
</dbReference>
<dbReference type="UniPathway" id="UPA00048">
    <property type="reaction ID" value="UER00073"/>
</dbReference>
<dbReference type="UniPathway" id="UPA00049">
    <property type="reaction ID" value="UER00062"/>
</dbReference>
<dbReference type="Proteomes" id="UP000000798">
    <property type="component" value="Chromosome"/>
</dbReference>
<dbReference type="GO" id="GO:0052656">
    <property type="term" value="F:L-isoleucine-2-oxoglutarate transaminase activity"/>
    <property type="evidence" value="ECO:0007669"/>
    <property type="project" value="RHEA"/>
</dbReference>
<dbReference type="GO" id="GO:0052654">
    <property type="term" value="F:L-leucine-2-oxoglutarate transaminase activity"/>
    <property type="evidence" value="ECO:0007669"/>
    <property type="project" value="RHEA"/>
</dbReference>
<dbReference type="GO" id="GO:0052655">
    <property type="term" value="F:L-valine-2-oxoglutarate transaminase activity"/>
    <property type="evidence" value="ECO:0007669"/>
    <property type="project" value="RHEA"/>
</dbReference>
<dbReference type="GO" id="GO:0019752">
    <property type="term" value="P:carboxylic acid metabolic process"/>
    <property type="evidence" value="ECO:0000318"/>
    <property type="project" value="GO_Central"/>
</dbReference>
<dbReference type="GO" id="GO:0009097">
    <property type="term" value="P:isoleucine biosynthetic process"/>
    <property type="evidence" value="ECO:0007669"/>
    <property type="project" value="UniProtKB-UniPathway"/>
</dbReference>
<dbReference type="GO" id="GO:0009098">
    <property type="term" value="P:L-leucine biosynthetic process"/>
    <property type="evidence" value="ECO:0007669"/>
    <property type="project" value="UniProtKB-UniPathway"/>
</dbReference>
<dbReference type="GO" id="GO:0009099">
    <property type="term" value="P:L-valine biosynthetic process"/>
    <property type="evidence" value="ECO:0007669"/>
    <property type="project" value="UniProtKB-UniPathway"/>
</dbReference>
<dbReference type="CDD" id="cd01557">
    <property type="entry name" value="BCAT_beta_family"/>
    <property type="match status" value="1"/>
</dbReference>
<dbReference type="FunFam" id="3.20.10.10:FF:000013">
    <property type="entry name" value="Branched-chain-amino-acid aminotransferase"/>
    <property type="match status" value="1"/>
</dbReference>
<dbReference type="FunFam" id="3.30.470.10:FF:000015">
    <property type="entry name" value="Branched-chain-amino-acid aminotransferase"/>
    <property type="match status" value="1"/>
</dbReference>
<dbReference type="Gene3D" id="3.30.470.10">
    <property type="match status" value="1"/>
</dbReference>
<dbReference type="Gene3D" id="3.20.10.10">
    <property type="entry name" value="D-amino Acid Aminotransferase, subunit A, domain 2"/>
    <property type="match status" value="1"/>
</dbReference>
<dbReference type="InterPro" id="IPR001544">
    <property type="entry name" value="Aminotrans_IV"/>
</dbReference>
<dbReference type="InterPro" id="IPR018300">
    <property type="entry name" value="Aminotrans_IV_CS"/>
</dbReference>
<dbReference type="InterPro" id="IPR036038">
    <property type="entry name" value="Aminotransferase-like"/>
</dbReference>
<dbReference type="InterPro" id="IPR005785">
    <property type="entry name" value="B_amino_transI"/>
</dbReference>
<dbReference type="InterPro" id="IPR043132">
    <property type="entry name" value="BCAT-like_C"/>
</dbReference>
<dbReference type="InterPro" id="IPR043131">
    <property type="entry name" value="BCAT-like_N"/>
</dbReference>
<dbReference type="InterPro" id="IPR033939">
    <property type="entry name" value="BCAT_family"/>
</dbReference>
<dbReference type="InterPro" id="IPR050571">
    <property type="entry name" value="Class-IV_PLP-Dep_Aminotrnsfr"/>
</dbReference>
<dbReference type="NCBIfam" id="TIGR01122">
    <property type="entry name" value="ilvE_I"/>
    <property type="match status" value="1"/>
</dbReference>
<dbReference type="NCBIfam" id="NF005146">
    <property type="entry name" value="PRK06606.1"/>
    <property type="match status" value="1"/>
</dbReference>
<dbReference type="PANTHER" id="PTHR42743">
    <property type="entry name" value="AMINO-ACID AMINOTRANSFERASE"/>
    <property type="match status" value="1"/>
</dbReference>
<dbReference type="PANTHER" id="PTHR42743:SF4">
    <property type="entry name" value="BRANCHED-CHAIN-AMINO-ACID AMINOTRANSFERASE-RELATED"/>
    <property type="match status" value="1"/>
</dbReference>
<dbReference type="Pfam" id="PF01063">
    <property type="entry name" value="Aminotran_4"/>
    <property type="match status" value="1"/>
</dbReference>
<dbReference type="SUPFAM" id="SSF56752">
    <property type="entry name" value="D-aminoacid aminotransferase-like PLP-dependent enzymes"/>
    <property type="match status" value="1"/>
</dbReference>
<dbReference type="PROSITE" id="PS00770">
    <property type="entry name" value="AA_TRANSFER_CLASS_4"/>
    <property type="match status" value="1"/>
</dbReference>
<protein>
    <recommendedName>
        <fullName>Probable branched-chain-amino-acid aminotransferase</fullName>
        <shortName>BCAT</shortName>
        <ecNumber>2.6.1.42</ecNumber>
    </recommendedName>
</protein>
<keyword id="KW-0028">Amino-acid biosynthesis</keyword>
<keyword id="KW-0032">Aminotransferase</keyword>
<keyword id="KW-0100">Branched-chain amino acid biosynthesis</keyword>
<keyword id="KW-0663">Pyridoxal phosphate</keyword>
<keyword id="KW-1185">Reference proteome</keyword>
<keyword id="KW-0808">Transferase</keyword>
<feature type="chain" id="PRO_0000103271" description="Probable branched-chain-amino-acid aminotransferase">
    <location>
        <begin position="1"/>
        <end position="311"/>
    </location>
</feature>
<feature type="modified residue" description="N6-(pyridoxal phosphate)lysine" evidence="1">
    <location>
        <position position="160"/>
    </location>
</feature>